<sequence>MAMTLSTKAFAQRGVSARKNTVRVYAASTKVNPKLASKTEVERFKQATGLPAPAINGKQFPLKLGFTKTNELFVGRLAMVGFSASLIGEILTGKGALAQFGYETGLNGIEVDGLVIGLIAFNLIAAVLPTSQTFVPEEQDTISERPAGPLQDPRITLLEPKKFFGVQGFGFTKENELFVGRAAQLGFAFSLIGEAVTGKGALAQFDIETGLSLRDTEFGLVVFILFLLFAAINEGSGKFVDEESA</sequence>
<evidence type="ECO:0000255" key="1"/>
<evidence type="ECO:0000269" key="2">
    <source>
    </source>
</evidence>
<evidence type="ECO:0000269" key="3">
    <source>
    </source>
</evidence>
<evidence type="ECO:0000303" key="4">
    <source>
    </source>
</evidence>
<evidence type="ECO:0000305" key="5"/>
<evidence type="ECO:0000312" key="6">
    <source>
        <dbReference type="EMBL" id="EDP09214.1"/>
    </source>
</evidence>
<evidence type="ECO:0000312" key="7">
    <source>
        <dbReference type="EMBL" id="PNW88154.1"/>
    </source>
</evidence>
<dbReference type="EMBL" id="DS496108">
    <property type="protein sequence ID" value="EDP09214.1"/>
    <property type="molecule type" value="Genomic_DNA"/>
</dbReference>
<dbReference type="EMBL" id="CM008962">
    <property type="protein sequence ID" value="PNW88154.1"/>
    <property type="molecule type" value="Genomic_DNA"/>
</dbReference>
<dbReference type="RefSeq" id="XP_001689476.1">
    <property type="nucleotide sequence ID" value="XM_001689424.1"/>
</dbReference>
<dbReference type="SMR" id="A8HPM2"/>
<dbReference type="FunCoup" id="A8HPM2">
    <property type="interactions" value="647"/>
</dbReference>
<dbReference type="STRING" id="3055.A8HPM2"/>
<dbReference type="PaxDb" id="3055-EDP09214"/>
<dbReference type="EnsemblPlants" id="PNW88154">
    <property type="protein sequence ID" value="PNW88154"/>
    <property type="gene ID" value="CHLRE_01g016600v5"/>
</dbReference>
<dbReference type="GeneID" id="5715132"/>
<dbReference type="Gramene" id="PNW88154">
    <property type="protein sequence ID" value="PNW88154"/>
    <property type="gene ID" value="CHLRE_01g016600v5"/>
</dbReference>
<dbReference type="KEGG" id="cre:CHLRE_01g016600v5"/>
<dbReference type="eggNOG" id="ENOG502QTMT">
    <property type="taxonomic scope" value="Eukaryota"/>
</dbReference>
<dbReference type="HOGENOM" id="CLU_1134921_0_0_1"/>
<dbReference type="InParanoid" id="A8HPM2"/>
<dbReference type="OMA" id="PLAQFGY"/>
<dbReference type="OrthoDB" id="48883at2759"/>
<dbReference type="Proteomes" id="UP000006906">
    <property type="component" value="Chromosome 1"/>
</dbReference>
<dbReference type="GO" id="GO:0009535">
    <property type="term" value="C:chloroplast thylakoid membrane"/>
    <property type="evidence" value="ECO:0000318"/>
    <property type="project" value="GO_Central"/>
</dbReference>
<dbReference type="GO" id="GO:0009523">
    <property type="term" value="C:photosystem II"/>
    <property type="evidence" value="ECO:0007669"/>
    <property type="project" value="UniProtKB-KW"/>
</dbReference>
<dbReference type="GO" id="GO:0010196">
    <property type="term" value="P:nonphotochemical quenching"/>
    <property type="evidence" value="ECO:0000315"/>
    <property type="project" value="UniProtKB"/>
</dbReference>
<dbReference type="GO" id="GO:0015979">
    <property type="term" value="P:photosynthesis"/>
    <property type="evidence" value="ECO:0007669"/>
    <property type="project" value="UniProtKB-KW"/>
</dbReference>
<dbReference type="FunFam" id="1.10.3460.10:FF:000018">
    <property type="entry name" value="Photosystem II 22kDa chloroplast protein"/>
    <property type="match status" value="1"/>
</dbReference>
<dbReference type="Gene3D" id="1.10.3460.10">
    <property type="entry name" value="Chlorophyll a/b binding protein domain"/>
    <property type="match status" value="2"/>
</dbReference>
<dbReference type="PANTHER" id="PTHR14154">
    <property type="entry name" value="UPF0041 BRAIN PROTEIN 44-RELATED"/>
    <property type="match status" value="1"/>
</dbReference>
<dbReference type="SUPFAM" id="SSF103511">
    <property type="entry name" value="Chlorophyll a-b binding protein"/>
    <property type="match status" value="2"/>
</dbReference>
<accession>A8HPM2</accession>
<reference key="1">
    <citation type="journal article" date="2007" name="Science">
        <title>The Chlamydomonas genome reveals the evolution of key animal and plant functions.</title>
        <authorList>
            <person name="Merchant S.S."/>
            <person name="Prochnik S.E."/>
            <person name="Vallon O."/>
            <person name="Harris E.H."/>
            <person name="Karpowicz S.J."/>
            <person name="Witman G.B."/>
            <person name="Terry A."/>
            <person name="Salamov A."/>
            <person name="Fritz-Laylin L.K."/>
            <person name="Marechal-Drouard L."/>
            <person name="Marshall W.F."/>
            <person name="Qu L.H."/>
            <person name="Nelson D.R."/>
            <person name="Sanderfoot A.A."/>
            <person name="Spalding M.H."/>
            <person name="Kapitonov V.V."/>
            <person name="Ren Q."/>
            <person name="Ferris P."/>
            <person name="Lindquist E."/>
            <person name="Shapiro H."/>
            <person name="Lucas S.M."/>
            <person name="Grimwood J."/>
            <person name="Schmutz J."/>
            <person name="Cardol P."/>
            <person name="Cerutti H."/>
            <person name="Chanfreau G."/>
            <person name="Chen C.L."/>
            <person name="Cognat V."/>
            <person name="Croft M.T."/>
            <person name="Dent R."/>
            <person name="Dutcher S."/>
            <person name="Fernandez E."/>
            <person name="Fukuzawa H."/>
            <person name="Gonzalez-Ballester D."/>
            <person name="Gonzalez-Halphen D."/>
            <person name="Hallmann A."/>
            <person name="Hanikenne M."/>
            <person name="Hippler M."/>
            <person name="Inwood W."/>
            <person name="Jabbari K."/>
            <person name="Kalanon M."/>
            <person name="Kuras R."/>
            <person name="Lefebvre P.A."/>
            <person name="Lemaire S.D."/>
            <person name="Lobanov A.V."/>
            <person name="Lohr M."/>
            <person name="Manuell A."/>
            <person name="Meier I."/>
            <person name="Mets L."/>
            <person name="Mittag M."/>
            <person name="Mittelmeier T."/>
            <person name="Moroney J.V."/>
            <person name="Moseley J."/>
            <person name="Napoli C."/>
            <person name="Nedelcu A.M."/>
            <person name="Niyogi K."/>
            <person name="Novoselov S.V."/>
            <person name="Paulsen I.T."/>
            <person name="Pazour G.J."/>
            <person name="Purton S."/>
            <person name="Ral J.P."/>
            <person name="Riano-Pachon D.M."/>
            <person name="Riekhof W."/>
            <person name="Rymarquis L."/>
            <person name="Schroda M."/>
            <person name="Stern D."/>
            <person name="Umen J."/>
            <person name="Willows R."/>
            <person name="Wilson N."/>
            <person name="Zimmer S.L."/>
            <person name="Allmer J."/>
            <person name="Balk J."/>
            <person name="Bisova K."/>
            <person name="Chen C.J."/>
            <person name="Elias M."/>
            <person name="Gendler K."/>
            <person name="Hauser C."/>
            <person name="Lamb M.R."/>
            <person name="Ledford H."/>
            <person name="Long J.C."/>
            <person name="Minagawa J."/>
            <person name="Page M.D."/>
            <person name="Pan J."/>
            <person name="Pootakham W."/>
            <person name="Roje S."/>
            <person name="Rose A."/>
            <person name="Stahlberg E."/>
            <person name="Terauchi A.M."/>
            <person name="Yang P."/>
            <person name="Ball S."/>
            <person name="Bowler C."/>
            <person name="Dieckmann C.L."/>
            <person name="Gladyshev V.N."/>
            <person name="Green P."/>
            <person name="Jorgensen R."/>
            <person name="Mayfield S."/>
            <person name="Mueller-Roeber B."/>
            <person name="Rajamani S."/>
            <person name="Sayre R.T."/>
            <person name="Brokstein P."/>
            <person name="Dubchak I."/>
            <person name="Goodstein D."/>
            <person name="Hornick L."/>
            <person name="Huang Y.W."/>
            <person name="Jhaveri J."/>
            <person name="Luo Y."/>
            <person name="Martinez D."/>
            <person name="Ngau W.C."/>
            <person name="Otillar B."/>
            <person name="Poliakov A."/>
            <person name="Porter A."/>
            <person name="Szajkowski L."/>
            <person name="Werner G."/>
            <person name="Zhou K."/>
            <person name="Grigoriev I.V."/>
            <person name="Rokhsar D.S."/>
            <person name="Grossman A.R."/>
        </authorList>
    </citation>
    <scope>NUCLEOTIDE SEQUENCE [LARGE SCALE GENOMIC DNA]</scope>
    <source>
        <strain>CC-503</strain>
    </source>
</reference>
<reference key="2">
    <citation type="submission" date="2017-07" db="EMBL/GenBank/DDBJ databases">
        <title>WGS assembly of Chlamydomonas reinhardtii.</title>
        <authorList>
            <consortium name="Chlamydomonas Annotation Team"/>
            <consortium name="JGI Annotation Team"/>
            <person name="Merchant S.S."/>
            <person name="Prochnik S.E."/>
            <person name="Vallon O."/>
            <person name="Harris E.H."/>
            <person name="Karpowicz S.J."/>
            <person name="Witman G.B."/>
            <person name="Terry A."/>
            <person name="Salamov A."/>
            <person name="Fritz-Laylin L.K."/>
            <person name="Marechal-Drouard L."/>
            <person name="Marshall W.F."/>
            <person name="Qu L.H."/>
            <person name="Nelson D.R."/>
            <person name="Sanderfoot A.A."/>
            <person name="Spalding M.H."/>
            <person name="Kapitonov V.V."/>
            <person name="Ren Q."/>
            <person name="Ferris P."/>
            <person name="Lindquist E."/>
            <person name="Shapiro H."/>
            <person name="Lucas S.M."/>
            <person name="Grimwood J."/>
            <person name="Schmutz J."/>
            <person name="Grigoriev I.V."/>
            <person name="Rokhsar D.S."/>
        </authorList>
    </citation>
    <scope>GENOME REANNOTATION</scope>
    <source>
        <strain>CC-503</strain>
    </source>
</reference>
<reference key="3">
    <citation type="journal article" date="2016" name="J. Biol. Chem.">
        <title>Photosystem II subunit PsbS is involved in the induction of LHCSR protein-dependent energy dissipation in Chlamydomonas reinhardtii.</title>
        <authorList>
            <person name="Correa-Galvis V."/>
            <person name="Redekop P."/>
            <person name="Guan K."/>
            <person name="Griess A."/>
            <person name="Truong T.B."/>
            <person name="Wakao S."/>
            <person name="Niyogi K.K."/>
            <person name="Jahns P."/>
        </authorList>
    </citation>
    <scope>FUNCTION</scope>
    <scope>INDUCTION BY HIGH LIGHT</scope>
</reference>
<reference key="4">
    <citation type="journal article" date="2016" name="Plant Physiol.">
        <title>Chlamydomonas reinhardtii PsbS protein is functional and accumulates rapidly and transiently under high light.</title>
        <authorList>
            <person name="Tibiletti T."/>
            <person name="Auroy P."/>
            <person name="Peltier G."/>
            <person name="Caffarri S."/>
        </authorList>
    </citation>
    <scope>FUNCTION</scope>
    <scope>INDUCTION BY HIGH LIGHT</scope>
</reference>
<comment type="function">
    <text evidence="2 3">Required for non-photochemical quenching (NPQ), a mechanism that converts and dissipates the harmful excess absorbed light energy into heat and protect the photosynthetic apparatus from photo-oxidative damage (PubMed:27358399). Seems involved in the activation of NPQ, possibly by promoting conformational changes required for activation of LHCSR3-dependent quenching in the antenna of photosystem II (PSII) (PubMed:27329221, PubMed:27358399).</text>
</comment>
<comment type="subcellular location">
    <subcellularLocation>
        <location evidence="5">Plastid</location>
        <location evidence="5">Chloroplast thylakoid membrane</location>
        <topology evidence="1">Multi-pass membrane protein</topology>
    </subcellularLocation>
</comment>
<comment type="induction">
    <text evidence="2 3">Induced transiently by high light stress (at protein level).</text>
</comment>
<comment type="similarity">
    <text evidence="5">Belongs to the ELIP/psbS family.</text>
</comment>
<proteinExistence type="evidence at protein level"/>
<feature type="transit peptide" description="Chloroplast" evidence="1">
    <location>
        <begin position="1"/>
        <end position="25"/>
    </location>
</feature>
<feature type="chain" id="PRO_0000447658" description="Photosystem II protein PSBS1">
    <location>
        <begin position="26"/>
        <end position="245"/>
    </location>
</feature>
<feature type="transmembrane region" description="Helical" evidence="1">
    <location>
        <begin position="72"/>
        <end position="92"/>
    </location>
</feature>
<feature type="transmembrane region" description="Helical" evidence="1">
    <location>
        <begin position="108"/>
        <end position="128"/>
    </location>
</feature>
<feature type="transmembrane region" description="Helical" evidence="1">
    <location>
        <begin position="185"/>
        <end position="205"/>
    </location>
</feature>
<feature type="transmembrane region" description="Helical" evidence="1">
    <location>
        <begin position="217"/>
        <end position="237"/>
    </location>
</feature>
<protein>
    <recommendedName>
        <fullName evidence="5">Photosystem II protein PSBS1</fullName>
    </recommendedName>
    <alternativeName>
        <fullName evidence="5">Protein PHOTOSYSTEM II SUBUNIT S1</fullName>
    </alternativeName>
</protein>
<name>PSBS1_CHLRE</name>
<gene>
    <name evidence="4" type="primary">PSBS1</name>
    <name evidence="7" type="ORF">CHLRE_01g016600v5</name>
    <name evidence="6" type="ORF">CHLREDRAFT_196341</name>
</gene>
<keyword id="KW-0150">Chloroplast</keyword>
<keyword id="KW-0472">Membrane</keyword>
<keyword id="KW-0602">Photosynthesis</keyword>
<keyword id="KW-0604">Photosystem II</keyword>
<keyword id="KW-0934">Plastid</keyword>
<keyword id="KW-1185">Reference proteome</keyword>
<keyword id="KW-0793">Thylakoid</keyword>
<keyword id="KW-0809">Transit peptide</keyword>
<keyword id="KW-0812">Transmembrane</keyword>
<keyword id="KW-1133">Transmembrane helix</keyword>
<organism>
    <name type="scientific">Chlamydomonas reinhardtii</name>
    <name type="common">Chlamydomonas smithii</name>
    <dbReference type="NCBI Taxonomy" id="3055"/>
    <lineage>
        <taxon>Eukaryota</taxon>
        <taxon>Viridiplantae</taxon>
        <taxon>Chlorophyta</taxon>
        <taxon>core chlorophytes</taxon>
        <taxon>Chlorophyceae</taxon>
        <taxon>CS clade</taxon>
        <taxon>Chlamydomonadales</taxon>
        <taxon>Chlamydomonadaceae</taxon>
        <taxon>Chlamydomonas</taxon>
    </lineage>
</organism>